<sequence length="59" mass="6887">MPKIIEAVYENGVFKPLQKVDLREGEKVKIIAGNLVERLRKYRVKVDSDIVAEFISERR</sequence>
<accession>O29175</accession>
<feature type="chain" id="PRO_0000156853" description="Putative antitoxin AF_1090">
    <location>
        <begin position="1"/>
        <end position="59"/>
    </location>
</feature>
<reference key="1">
    <citation type="journal article" date="1997" name="Nature">
        <title>The complete genome sequence of the hyperthermophilic, sulphate-reducing archaeon Archaeoglobus fulgidus.</title>
        <authorList>
            <person name="Klenk H.-P."/>
            <person name="Clayton R.A."/>
            <person name="Tomb J.-F."/>
            <person name="White O."/>
            <person name="Nelson K.E."/>
            <person name="Ketchum K.A."/>
            <person name="Dodson R.J."/>
            <person name="Gwinn M.L."/>
            <person name="Hickey E.K."/>
            <person name="Peterson J.D."/>
            <person name="Richardson D.L."/>
            <person name="Kerlavage A.R."/>
            <person name="Graham D.E."/>
            <person name="Kyrpides N.C."/>
            <person name="Fleischmann R.D."/>
            <person name="Quackenbush J."/>
            <person name="Lee N.H."/>
            <person name="Sutton G.G."/>
            <person name="Gill S.R."/>
            <person name="Kirkness E.F."/>
            <person name="Dougherty B.A."/>
            <person name="McKenney K."/>
            <person name="Adams M.D."/>
            <person name="Loftus B.J."/>
            <person name="Peterson S.N."/>
            <person name="Reich C.I."/>
            <person name="McNeil L.K."/>
            <person name="Badger J.H."/>
            <person name="Glodek A."/>
            <person name="Zhou L."/>
            <person name="Overbeek R."/>
            <person name="Gocayne J.D."/>
            <person name="Weidman J.F."/>
            <person name="McDonald L.A."/>
            <person name="Utterback T.R."/>
            <person name="Cotton M.D."/>
            <person name="Spriggs T."/>
            <person name="Artiach P."/>
            <person name="Kaine B.P."/>
            <person name="Sykes S.M."/>
            <person name="Sadow P.W."/>
            <person name="D'Andrea K.P."/>
            <person name="Bowman C."/>
            <person name="Fujii C."/>
            <person name="Garland S.A."/>
            <person name="Mason T.M."/>
            <person name="Olsen G.J."/>
            <person name="Fraser C.M."/>
            <person name="Smith H.O."/>
            <person name="Woese C.R."/>
            <person name="Venter J.C."/>
        </authorList>
    </citation>
    <scope>NUCLEOTIDE SEQUENCE [LARGE SCALE GENOMIC DNA]</scope>
    <source>
        <strain>ATCC 49558 / DSM 4304 / JCM 9628 / NBRC 100126 / VC-16</strain>
    </source>
</reference>
<comment type="function">
    <text evidence="1">Possibly the antitoxin component of a type II toxin-antitoxin (TA) system.</text>
</comment>
<comment type="similarity">
    <text evidence="1">Belongs to the UPF0165 family.</text>
</comment>
<name>Y1090_ARCFU</name>
<evidence type="ECO:0000305" key="1"/>
<proteinExistence type="inferred from homology"/>
<organism>
    <name type="scientific">Archaeoglobus fulgidus (strain ATCC 49558 / DSM 4304 / JCM 9628 / NBRC 100126 / VC-16)</name>
    <dbReference type="NCBI Taxonomy" id="224325"/>
    <lineage>
        <taxon>Archaea</taxon>
        <taxon>Methanobacteriati</taxon>
        <taxon>Methanobacteriota</taxon>
        <taxon>Archaeoglobi</taxon>
        <taxon>Archaeoglobales</taxon>
        <taxon>Archaeoglobaceae</taxon>
        <taxon>Archaeoglobus</taxon>
    </lineage>
</organism>
<protein>
    <recommendedName>
        <fullName>Putative antitoxin AF_1090</fullName>
    </recommendedName>
</protein>
<gene>
    <name type="ordered locus">AF_1090</name>
</gene>
<keyword id="KW-1185">Reference proteome</keyword>
<keyword id="KW-1277">Toxin-antitoxin system</keyword>
<dbReference type="EMBL" id="AE000782">
    <property type="protein sequence ID" value="AAB90157.1"/>
    <property type="molecule type" value="Genomic_DNA"/>
</dbReference>
<dbReference type="PIR" id="A69386">
    <property type="entry name" value="A69386"/>
</dbReference>
<dbReference type="RefSeq" id="WP_010878586.1">
    <property type="nucleotide sequence ID" value="NC_000917.1"/>
</dbReference>
<dbReference type="SMR" id="O29175"/>
<dbReference type="STRING" id="224325.AF_1090"/>
<dbReference type="PaxDb" id="224325-AF_1090"/>
<dbReference type="EnsemblBacteria" id="AAB90157">
    <property type="protein sequence ID" value="AAB90157"/>
    <property type="gene ID" value="AF_1090"/>
</dbReference>
<dbReference type="KEGG" id="afu:AF_1090"/>
<dbReference type="eggNOG" id="arCOG03880">
    <property type="taxonomic scope" value="Archaea"/>
</dbReference>
<dbReference type="HOGENOM" id="CLU_200885_0_0_2"/>
<dbReference type="OrthoDB" id="116241at2157"/>
<dbReference type="PhylomeDB" id="O29175"/>
<dbReference type="Proteomes" id="UP000002199">
    <property type="component" value="Chromosome"/>
</dbReference>
<dbReference type="Gene3D" id="4.10.1150.10">
    <property type="entry name" value="AF2212/PG0164-like"/>
    <property type="match status" value="1"/>
</dbReference>
<dbReference type="InterPro" id="IPR008203">
    <property type="entry name" value="AF2212-like"/>
</dbReference>
<dbReference type="InterPro" id="IPR024069">
    <property type="entry name" value="AF2212-like_dom_sf"/>
</dbReference>
<dbReference type="Pfam" id="PF01954">
    <property type="entry name" value="AF2212-like"/>
    <property type="match status" value="1"/>
</dbReference>
<dbReference type="SUPFAM" id="SSF141694">
    <property type="entry name" value="AF2212/PG0164-like"/>
    <property type="match status" value="1"/>
</dbReference>